<dbReference type="EC" id="7.3.2.1" evidence="1"/>
<dbReference type="EMBL" id="AE000782">
    <property type="protein sequence ID" value="AAB89887.1"/>
    <property type="molecule type" value="Genomic_DNA"/>
</dbReference>
<dbReference type="PIR" id="F69419">
    <property type="entry name" value="F69419"/>
</dbReference>
<dbReference type="RefSeq" id="WP_010878856.1">
    <property type="nucleotide sequence ID" value="NC_000917.1"/>
</dbReference>
<dbReference type="SMR" id="O28912"/>
<dbReference type="STRING" id="224325.AF_1359"/>
<dbReference type="PaxDb" id="224325-AF_1359"/>
<dbReference type="DNASU" id="1484583"/>
<dbReference type="EnsemblBacteria" id="AAB89887">
    <property type="protein sequence ID" value="AAB89887"/>
    <property type="gene ID" value="AF_1359"/>
</dbReference>
<dbReference type="GeneID" id="1484583"/>
<dbReference type="KEGG" id="afu:AF_1359"/>
<dbReference type="eggNOG" id="arCOG00231">
    <property type="taxonomic scope" value="Archaea"/>
</dbReference>
<dbReference type="HOGENOM" id="CLU_000604_1_22_2"/>
<dbReference type="OrthoDB" id="31298at2157"/>
<dbReference type="PhylomeDB" id="O28912"/>
<dbReference type="Proteomes" id="UP000002199">
    <property type="component" value="Chromosome"/>
</dbReference>
<dbReference type="GO" id="GO:0005886">
    <property type="term" value="C:plasma membrane"/>
    <property type="evidence" value="ECO:0007669"/>
    <property type="project" value="UniProtKB-SubCell"/>
</dbReference>
<dbReference type="GO" id="GO:0005524">
    <property type="term" value="F:ATP binding"/>
    <property type="evidence" value="ECO:0007669"/>
    <property type="project" value="UniProtKB-KW"/>
</dbReference>
<dbReference type="GO" id="GO:0016887">
    <property type="term" value="F:ATP hydrolysis activity"/>
    <property type="evidence" value="ECO:0007669"/>
    <property type="project" value="InterPro"/>
</dbReference>
<dbReference type="GO" id="GO:0015415">
    <property type="term" value="F:ATPase-coupled phosphate ion transmembrane transporter activity"/>
    <property type="evidence" value="ECO:0007669"/>
    <property type="project" value="UniProtKB-EC"/>
</dbReference>
<dbReference type="GO" id="GO:0035435">
    <property type="term" value="P:phosphate ion transmembrane transport"/>
    <property type="evidence" value="ECO:0007669"/>
    <property type="project" value="InterPro"/>
</dbReference>
<dbReference type="CDD" id="cd03260">
    <property type="entry name" value="ABC_PstB_phosphate_transporter"/>
    <property type="match status" value="1"/>
</dbReference>
<dbReference type="Gene3D" id="3.40.50.300">
    <property type="entry name" value="P-loop containing nucleotide triphosphate hydrolases"/>
    <property type="match status" value="1"/>
</dbReference>
<dbReference type="InterPro" id="IPR003593">
    <property type="entry name" value="AAA+_ATPase"/>
</dbReference>
<dbReference type="InterPro" id="IPR003439">
    <property type="entry name" value="ABC_transporter-like_ATP-bd"/>
</dbReference>
<dbReference type="InterPro" id="IPR017871">
    <property type="entry name" value="ABC_transporter-like_CS"/>
</dbReference>
<dbReference type="InterPro" id="IPR027417">
    <property type="entry name" value="P-loop_NTPase"/>
</dbReference>
<dbReference type="InterPro" id="IPR005670">
    <property type="entry name" value="PstB-like"/>
</dbReference>
<dbReference type="NCBIfam" id="TIGR00972">
    <property type="entry name" value="3a0107s01c2"/>
    <property type="match status" value="1"/>
</dbReference>
<dbReference type="PANTHER" id="PTHR43423">
    <property type="entry name" value="ABC TRANSPORTER I FAMILY MEMBER 17"/>
    <property type="match status" value="1"/>
</dbReference>
<dbReference type="PANTHER" id="PTHR43423:SF1">
    <property type="entry name" value="ABC TRANSPORTER I FAMILY MEMBER 17"/>
    <property type="match status" value="1"/>
</dbReference>
<dbReference type="Pfam" id="PF00005">
    <property type="entry name" value="ABC_tran"/>
    <property type="match status" value="1"/>
</dbReference>
<dbReference type="SMART" id="SM00382">
    <property type="entry name" value="AAA"/>
    <property type="match status" value="1"/>
</dbReference>
<dbReference type="SUPFAM" id="SSF52540">
    <property type="entry name" value="P-loop containing nucleoside triphosphate hydrolases"/>
    <property type="match status" value="1"/>
</dbReference>
<dbReference type="PROSITE" id="PS00211">
    <property type="entry name" value="ABC_TRANSPORTER_1"/>
    <property type="match status" value="1"/>
</dbReference>
<dbReference type="PROSITE" id="PS50893">
    <property type="entry name" value="ABC_TRANSPORTER_2"/>
    <property type="match status" value="1"/>
</dbReference>
<dbReference type="PROSITE" id="PS51238">
    <property type="entry name" value="PSTB"/>
    <property type="match status" value="1"/>
</dbReference>
<keyword id="KW-0067">ATP-binding</keyword>
<keyword id="KW-1003">Cell membrane</keyword>
<keyword id="KW-0472">Membrane</keyword>
<keyword id="KW-0547">Nucleotide-binding</keyword>
<keyword id="KW-0592">Phosphate transport</keyword>
<keyword id="KW-1185">Reference proteome</keyword>
<keyword id="KW-1278">Translocase</keyword>
<keyword id="KW-0813">Transport</keyword>
<organism>
    <name type="scientific">Archaeoglobus fulgidus (strain ATCC 49558 / DSM 4304 / JCM 9628 / NBRC 100126 / VC-16)</name>
    <dbReference type="NCBI Taxonomy" id="224325"/>
    <lineage>
        <taxon>Archaea</taxon>
        <taxon>Methanobacteriati</taxon>
        <taxon>Methanobacteriota</taxon>
        <taxon>Archaeoglobi</taxon>
        <taxon>Archaeoglobales</taxon>
        <taxon>Archaeoglobaceae</taxon>
        <taxon>Archaeoglobus</taxon>
    </lineage>
</organism>
<comment type="function">
    <text evidence="1">Part of the ABC transporter complex PstSACB involved in phosphate import. Responsible for energy coupling to the transport system.</text>
</comment>
<comment type="catalytic activity">
    <reaction evidence="1">
        <text>phosphate(out) + ATP + H2O = ADP + 2 phosphate(in) + H(+)</text>
        <dbReference type="Rhea" id="RHEA:24440"/>
        <dbReference type="ChEBI" id="CHEBI:15377"/>
        <dbReference type="ChEBI" id="CHEBI:15378"/>
        <dbReference type="ChEBI" id="CHEBI:30616"/>
        <dbReference type="ChEBI" id="CHEBI:43474"/>
        <dbReference type="ChEBI" id="CHEBI:456216"/>
        <dbReference type="EC" id="7.3.2.1"/>
    </reaction>
</comment>
<comment type="subunit">
    <text evidence="1">The complex is composed of two ATP-binding proteins (PstB), two transmembrane proteins (PstC and PstA) and a solute-binding protein (PstS).</text>
</comment>
<comment type="subcellular location">
    <subcellularLocation>
        <location evidence="1">Cell membrane</location>
        <topology evidence="1">Peripheral membrane protein</topology>
    </subcellularLocation>
</comment>
<comment type="similarity">
    <text evidence="1">Belongs to the ABC transporter superfamily. Phosphate importer (TC 3.A.1.7) family.</text>
</comment>
<evidence type="ECO:0000255" key="1">
    <source>
        <dbReference type="HAMAP-Rule" id="MF_01702"/>
    </source>
</evidence>
<name>PSTB_ARCFU</name>
<gene>
    <name evidence="1" type="primary">pstB</name>
    <name type="ordered locus">AF_1359</name>
</gene>
<reference key="1">
    <citation type="journal article" date="1997" name="Nature">
        <title>The complete genome sequence of the hyperthermophilic, sulphate-reducing archaeon Archaeoglobus fulgidus.</title>
        <authorList>
            <person name="Klenk H.-P."/>
            <person name="Clayton R.A."/>
            <person name="Tomb J.-F."/>
            <person name="White O."/>
            <person name="Nelson K.E."/>
            <person name="Ketchum K.A."/>
            <person name="Dodson R.J."/>
            <person name="Gwinn M.L."/>
            <person name="Hickey E.K."/>
            <person name="Peterson J.D."/>
            <person name="Richardson D.L."/>
            <person name="Kerlavage A.R."/>
            <person name="Graham D.E."/>
            <person name="Kyrpides N.C."/>
            <person name="Fleischmann R.D."/>
            <person name="Quackenbush J."/>
            <person name="Lee N.H."/>
            <person name="Sutton G.G."/>
            <person name="Gill S.R."/>
            <person name="Kirkness E.F."/>
            <person name="Dougherty B.A."/>
            <person name="McKenney K."/>
            <person name="Adams M.D."/>
            <person name="Loftus B.J."/>
            <person name="Peterson S.N."/>
            <person name="Reich C.I."/>
            <person name="McNeil L.K."/>
            <person name="Badger J.H."/>
            <person name="Glodek A."/>
            <person name="Zhou L."/>
            <person name="Overbeek R."/>
            <person name="Gocayne J.D."/>
            <person name="Weidman J.F."/>
            <person name="McDonald L.A."/>
            <person name="Utterback T.R."/>
            <person name="Cotton M.D."/>
            <person name="Spriggs T."/>
            <person name="Artiach P."/>
            <person name="Kaine B.P."/>
            <person name="Sykes S.M."/>
            <person name="Sadow P.W."/>
            <person name="D'Andrea K.P."/>
            <person name="Bowman C."/>
            <person name="Fujii C."/>
            <person name="Garland S.A."/>
            <person name="Mason T.M."/>
            <person name="Olsen G.J."/>
            <person name="Fraser C.M."/>
            <person name="Smith H.O."/>
            <person name="Woese C.R."/>
            <person name="Venter J.C."/>
        </authorList>
    </citation>
    <scope>NUCLEOTIDE SEQUENCE [LARGE SCALE GENOMIC DNA]</scope>
    <source>
        <strain>ATCC 49558 / DSM 4304 / JCM 9628 / NBRC 100126 / VC-16</strain>
    </source>
</reference>
<accession>O28912</accession>
<protein>
    <recommendedName>
        <fullName evidence="1">Phosphate import ATP-binding protein PstB</fullName>
        <ecNumber evidence="1">7.3.2.1</ecNumber>
    </recommendedName>
    <alternativeName>
        <fullName evidence="1">ABC phosphate transporter</fullName>
    </alternativeName>
    <alternativeName>
        <fullName evidence="1">Phosphate-transporting ATPase</fullName>
    </alternativeName>
</protein>
<sequence>MEVAFDIRNFSVYYGNKVGIRNVNLEIYRNKVTAIIGPSGCGKSTLLRSLNRLIELVDGVRIEGEVIFDGKNIYDDGVDAVELRRRIGMVFQHPNPFPKSIFDNVAYGPRVHGIKDKERLKEIVEESLKKAALWDEVKDRLSDSALGLSGGQQQRLCIARAIATNPEVILFDEPTSALDPIAAAKIEELMVELKKNYTVVVVTHNIQQAARISDYVAFFWMGELVEYGKTAKVFEKPEKELTEKYLTGRVG</sequence>
<proteinExistence type="inferred from homology"/>
<feature type="chain" id="PRO_0000092942" description="Phosphate import ATP-binding protein PstB">
    <location>
        <begin position="1"/>
        <end position="251"/>
    </location>
</feature>
<feature type="domain" description="ABC transporter" evidence="1">
    <location>
        <begin position="5"/>
        <end position="246"/>
    </location>
</feature>
<feature type="binding site" evidence="1">
    <location>
        <begin position="37"/>
        <end position="44"/>
    </location>
    <ligand>
        <name>ATP</name>
        <dbReference type="ChEBI" id="CHEBI:30616"/>
    </ligand>
</feature>